<dbReference type="EMBL" id="CP000046">
    <property type="status" value="NOT_ANNOTATED_CDS"/>
    <property type="molecule type" value="Genomic_DNA"/>
</dbReference>
<dbReference type="SMR" id="P0C0A5"/>
<dbReference type="Proteomes" id="UP000000530">
    <property type="component" value="Chromosome"/>
</dbReference>
<dbReference type="GO" id="GO:0005737">
    <property type="term" value="C:cytoplasm"/>
    <property type="evidence" value="ECO:0007669"/>
    <property type="project" value="UniProtKB-ARBA"/>
</dbReference>
<dbReference type="GO" id="GO:1990904">
    <property type="term" value="C:ribonucleoprotein complex"/>
    <property type="evidence" value="ECO:0007669"/>
    <property type="project" value="UniProtKB-KW"/>
</dbReference>
<dbReference type="GO" id="GO:0005840">
    <property type="term" value="C:ribosome"/>
    <property type="evidence" value="ECO:0007669"/>
    <property type="project" value="UniProtKB-KW"/>
</dbReference>
<dbReference type="GO" id="GO:0003735">
    <property type="term" value="F:structural constituent of ribosome"/>
    <property type="evidence" value="ECO:0007669"/>
    <property type="project" value="InterPro"/>
</dbReference>
<dbReference type="GO" id="GO:0006412">
    <property type="term" value="P:translation"/>
    <property type="evidence" value="ECO:0007669"/>
    <property type="project" value="UniProtKB-UniRule"/>
</dbReference>
<dbReference type="Gene3D" id="2.20.28.120">
    <property type="entry name" value="Ribosomal protein L33"/>
    <property type="match status" value="1"/>
</dbReference>
<dbReference type="HAMAP" id="MF_00294">
    <property type="entry name" value="Ribosomal_bL33"/>
    <property type="match status" value="1"/>
</dbReference>
<dbReference type="InterPro" id="IPR001705">
    <property type="entry name" value="Ribosomal_bL33"/>
</dbReference>
<dbReference type="InterPro" id="IPR018264">
    <property type="entry name" value="Ribosomal_bL33_CS"/>
</dbReference>
<dbReference type="InterPro" id="IPR038584">
    <property type="entry name" value="Ribosomal_bL33_sf"/>
</dbReference>
<dbReference type="InterPro" id="IPR011332">
    <property type="entry name" value="Ribosomal_zn-bd"/>
</dbReference>
<dbReference type="NCBIfam" id="NF001764">
    <property type="entry name" value="PRK00504.1"/>
    <property type="match status" value="1"/>
</dbReference>
<dbReference type="NCBIfam" id="TIGR01023">
    <property type="entry name" value="rpmG_bact"/>
    <property type="match status" value="1"/>
</dbReference>
<dbReference type="Pfam" id="PF00471">
    <property type="entry name" value="Ribosomal_L33"/>
    <property type="match status" value="1"/>
</dbReference>
<dbReference type="SUPFAM" id="SSF57829">
    <property type="entry name" value="Zn-binding ribosomal proteins"/>
    <property type="match status" value="1"/>
</dbReference>
<dbReference type="PROSITE" id="PS00582">
    <property type="entry name" value="RIBOSOMAL_L33"/>
    <property type="match status" value="1"/>
</dbReference>
<organism>
    <name type="scientific">Staphylococcus aureus (strain COL)</name>
    <dbReference type="NCBI Taxonomy" id="93062"/>
    <lineage>
        <taxon>Bacteria</taxon>
        <taxon>Bacillati</taxon>
        <taxon>Bacillota</taxon>
        <taxon>Bacilli</taxon>
        <taxon>Bacillales</taxon>
        <taxon>Staphylococcaceae</taxon>
        <taxon>Staphylococcus</taxon>
    </lineage>
</organism>
<reference key="1">
    <citation type="journal article" date="2005" name="J. Bacteriol.">
        <title>Insights on evolution of virulence and resistance from the complete genome analysis of an early methicillin-resistant Staphylococcus aureus strain and a biofilm-producing methicillin-resistant Staphylococcus epidermidis strain.</title>
        <authorList>
            <person name="Gill S.R."/>
            <person name="Fouts D.E."/>
            <person name="Archer G.L."/>
            <person name="Mongodin E.F."/>
            <person name="DeBoy R.T."/>
            <person name="Ravel J."/>
            <person name="Paulsen I.T."/>
            <person name="Kolonay J.F."/>
            <person name="Brinkac L.M."/>
            <person name="Beanan M.J."/>
            <person name="Dodson R.J."/>
            <person name="Daugherty S.C."/>
            <person name="Madupu R."/>
            <person name="Angiuoli S.V."/>
            <person name="Durkin A.S."/>
            <person name="Haft D.H."/>
            <person name="Vamathevan J.J."/>
            <person name="Khouri H."/>
            <person name="Utterback T.R."/>
            <person name="Lee C."/>
            <person name="Dimitrov G."/>
            <person name="Jiang L."/>
            <person name="Qin H."/>
            <person name="Weidman J."/>
            <person name="Tran K."/>
            <person name="Kang K.H."/>
            <person name="Hance I.R."/>
            <person name="Nelson K.E."/>
            <person name="Fraser C.M."/>
        </authorList>
    </citation>
    <scope>NUCLEOTIDE SEQUENCE [LARGE SCALE GENOMIC DNA]</scope>
    <source>
        <strain>COL</strain>
    </source>
</reference>
<feature type="chain" id="PRO_0000170212" description="Large ribosomal subunit protein bL33C">
    <location>
        <begin position="1"/>
        <end position="47"/>
    </location>
</feature>
<gene>
    <name type="primary">rpmG3</name>
    <name type="ordered locus">SACOL0580.1</name>
</gene>
<comment type="similarity">
    <text evidence="2">Belongs to the bacterial ribosomal protein bL33 family.</text>
</comment>
<sequence>MRKIPLNCEACGNRNYNVPKQEGSATRLTLKKYCPKCNAHTIHKESK</sequence>
<protein>
    <recommendedName>
        <fullName evidence="1">Large ribosomal subunit protein bL33C</fullName>
    </recommendedName>
    <alternativeName>
        <fullName>50S ribosomal protein L33 3</fullName>
    </alternativeName>
</protein>
<proteinExistence type="inferred from homology"/>
<accession>P0C0A5</accession>
<keyword id="KW-0687">Ribonucleoprotein</keyword>
<keyword id="KW-0689">Ribosomal protein</keyword>
<name>RL333_STAAC</name>
<evidence type="ECO:0000255" key="1">
    <source>
        <dbReference type="HAMAP-Rule" id="MF_00294"/>
    </source>
</evidence>
<evidence type="ECO:0000305" key="2"/>